<proteinExistence type="inferred from homology"/>
<dbReference type="EMBL" id="DP000572">
    <property type="protein sequence ID" value="ABY82085.1"/>
    <property type="molecule type" value="Genomic_DNA"/>
</dbReference>
<dbReference type="RefSeq" id="XP_008982580.1">
    <property type="nucleotide sequence ID" value="XM_008984332.3"/>
</dbReference>
<dbReference type="RefSeq" id="XP_008982581.1">
    <property type="nucleotide sequence ID" value="XM_008984333.4"/>
</dbReference>
<dbReference type="RefSeq" id="XP_035135265.1">
    <property type="nucleotide sequence ID" value="XM_035279374.2"/>
</dbReference>
<dbReference type="RefSeq" id="XP_035135266.1">
    <property type="nucleotide sequence ID" value="XM_035279375.2"/>
</dbReference>
<dbReference type="SMR" id="B0KWC3"/>
<dbReference type="FunCoup" id="B0KWC3">
    <property type="interactions" value="483"/>
</dbReference>
<dbReference type="STRING" id="9483.ENSCJAP00000053269"/>
<dbReference type="Ensembl" id="ENSCJAT00000077841.2">
    <property type="protein sequence ID" value="ENSCJAP00000053269.1"/>
    <property type="gene ID" value="ENSCJAG00000046203.2"/>
</dbReference>
<dbReference type="GeneID" id="100414721"/>
<dbReference type="KEGG" id="cjc:100414721"/>
<dbReference type="CTD" id="79626"/>
<dbReference type="eggNOG" id="ENOG502QST4">
    <property type="taxonomic scope" value="Eukaryota"/>
</dbReference>
<dbReference type="GeneTree" id="ENSGT00390000003488"/>
<dbReference type="HOGENOM" id="CLU_085918_1_0_1"/>
<dbReference type="InParanoid" id="B0KWC3"/>
<dbReference type="OMA" id="IRRVFDH"/>
<dbReference type="OrthoDB" id="10055976at2759"/>
<dbReference type="TreeFam" id="TF323415"/>
<dbReference type="Proteomes" id="UP000008225">
    <property type="component" value="Chromosome 18"/>
</dbReference>
<dbReference type="Bgee" id="ENSCJAG00000046203">
    <property type="expression patterns" value="Expressed in kidney and 6 other cell types or tissues"/>
</dbReference>
<dbReference type="GO" id="GO:0005764">
    <property type="term" value="C:lysosome"/>
    <property type="evidence" value="ECO:0007669"/>
    <property type="project" value="UniProtKB-SubCell"/>
</dbReference>
<dbReference type="GO" id="GO:0005634">
    <property type="term" value="C:nucleus"/>
    <property type="evidence" value="ECO:0007669"/>
    <property type="project" value="UniProtKB-SubCell"/>
</dbReference>
<dbReference type="GO" id="GO:0045087">
    <property type="term" value="P:innate immune response"/>
    <property type="evidence" value="ECO:0007669"/>
    <property type="project" value="UniProtKB-KW"/>
</dbReference>
<dbReference type="GO" id="GO:0050728">
    <property type="term" value="P:negative regulation of inflammatory response"/>
    <property type="evidence" value="ECO:0007669"/>
    <property type="project" value="Ensembl"/>
</dbReference>
<dbReference type="GO" id="GO:0050868">
    <property type="term" value="P:negative regulation of T cell activation"/>
    <property type="evidence" value="ECO:0007669"/>
    <property type="project" value="Ensembl"/>
</dbReference>
<dbReference type="GO" id="GO:0042981">
    <property type="term" value="P:regulation of apoptotic process"/>
    <property type="evidence" value="ECO:0007669"/>
    <property type="project" value="InterPro"/>
</dbReference>
<dbReference type="GO" id="GO:0042110">
    <property type="term" value="P:T cell activation"/>
    <property type="evidence" value="ECO:0007669"/>
    <property type="project" value="Ensembl"/>
</dbReference>
<dbReference type="FunFam" id="1.20.1440.160:FF:000001">
    <property type="entry name" value="Tumor necrosis factor alpha-induced protein 8-like 1"/>
    <property type="match status" value="1"/>
</dbReference>
<dbReference type="Gene3D" id="1.20.1440.160">
    <property type="entry name" value="Tumor necrosis factor alpha-induced protein 8-like"/>
    <property type="match status" value="1"/>
</dbReference>
<dbReference type="InterPro" id="IPR008477">
    <property type="entry name" value="TNFAIP8-like"/>
</dbReference>
<dbReference type="InterPro" id="IPR038355">
    <property type="entry name" value="TNFAIP8_sf"/>
</dbReference>
<dbReference type="PANTHER" id="PTHR12757:SF4">
    <property type="entry name" value="TUMOR NECROSIS FACTOR ALPHA-INDUCED PROTEIN 8-LIKE PROTEIN 2"/>
    <property type="match status" value="1"/>
</dbReference>
<dbReference type="PANTHER" id="PTHR12757">
    <property type="entry name" value="TUMOR NECROSIS FACTOR INDUCED PROTEIN"/>
    <property type="match status" value="1"/>
</dbReference>
<dbReference type="Pfam" id="PF05527">
    <property type="entry name" value="DUF758"/>
    <property type="match status" value="1"/>
</dbReference>
<feature type="chain" id="PRO_0000369392" description="Tumor necrosis factor alpha-induced protein 8-like protein 2">
    <location>
        <begin position="1"/>
        <end position="184"/>
    </location>
</feature>
<feature type="modified residue" description="Phosphoserine" evidence="2">
    <location>
        <position position="3"/>
    </location>
</feature>
<name>TP8L2_CALJA</name>
<gene>
    <name type="primary">TNFAIP8L2</name>
</gene>
<organism>
    <name type="scientific">Callithrix jacchus</name>
    <name type="common">White-tufted-ear marmoset</name>
    <dbReference type="NCBI Taxonomy" id="9483"/>
    <lineage>
        <taxon>Eukaryota</taxon>
        <taxon>Metazoa</taxon>
        <taxon>Chordata</taxon>
        <taxon>Craniata</taxon>
        <taxon>Vertebrata</taxon>
        <taxon>Euteleostomi</taxon>
        <taxon>Mammalia</taxon>
        <taxon>Eutheria</taxon>
        <taxon>Euarchontoglires</taxon>
        <taxon>Primates</taxon>
        <taxon>Haplorrhini</taxon>
        <taxon>Platyrrhini</taxon>
        <taxon>Cebidae</taxon>
        <taxon>Callitrichinae</taxon>
        <taxon>Callithrix</taxon>
        <taxon>Callithrix</taxon>
    </lineage>
</organism>
<comment type="function">
    <text evidence="2 3">Acts as a negative regulator of innate and adaptive immunity by maintaining immune homeostasis. Plays a regulatory role in the Toll-like signaling pathway by determining the strength of LPS-induced signaling and gene expression (By similarity). Inhibits TCR-mediated T-cell activation and negatively regulate T-cell function to prevent hyperresponsiveness (By similarity). Also inhibits autolysosome formation via negatively modulating MTOR activation by interacting with RAC1 and promoting the disassociation of the RAC1-MTOR complex (By similarity). Plays an essential role in NK-cell biology by acting as a checkpoint and displaying an expression pattern correlating with NK-cell maturation process and by negatively regulating NK-cell maturation and antitumor immunity (By similarity). Mechanistically, suppresses IL-15-triggered mTOR activity in NK-cells (By similarity).</text>
</comment>
<comment type="subunit">
    <text evidence="2">May interact with CASP8; however, such result is unclear since could not reproduce the interaction with CASP8. Interacts with RAC1.</text>
</comment>
<comment type="subcellular location">
    <subcellularLocation>
        <location evidence="2">Cytoplasm</location>
    </subcellularLocation>
    <subcellularLocation>
        <location evidence="2">Nucleus</location>
    </subcellularLocation>
    <subcellularLocation>
        <location evidence="2">Lysosome</location>
    </subcellularLocation>
</comment>
<comment type="domain">
    <text evidence="1">The central region was initially thought to constitute a DED (death effector) domain. However, 3D-structure data reveal a previously uncharacterized fold that is different from the predicted fold of a DED (death effector) domain. It consists of a large, hydrophobic central cavity that is poised for cofactor binding (By similarity).</text>
</comment>
<comment type="PTM">
    <text evidence="2">Phosphorylated by TAK1/MAP3K7; this phosphorylation triggers association with BTRC and subsequent ubiquitination and degradation.</text>
</comment>
<comment type="PTM">
    <text evidence="2">Ubiquitinated in a BTRC-depdent manner; leading to degradation mediated through the proteasome pathway.</text>
</comment>
<comment type="similarity">
    <text evidence="4">Belongs to the TNFAIP8 family. TNFAIP8L2 subfamily.</text>
</comment>
<accession>B0KWC3</accession>
<protein>
    <recommendedName>
        <fullName>Tumor necrosis factor alpha-induced protein 8-like protein 2</fullName>
        <shortName>TIPE2</shortName>
        <shortName>TNF alpha-induced protein 8-like protein 2</shortName>
        <shortName>TNFAIP8-like protein 2</shortName>
    </recommendedName>
</protein>
<keyword id="KW-0963">Cytoplasm</keyword>
<keyword id="KW-0391">Immunity</keyword>
<keyword id="KW-0399">Innate immunity</keyword>
<keyword id="KW-0458">Lysosome</keyword>
<keyword id="KW-0539">Nucleus</keyword>
<keyword id="KW-0597">Phosphoprotein</keyword>
<keyword id="KW-1185">Reference proteome</keyword>
<keyword id="KW-0832">Ubl conjugation</keyword>
<reference key="1">
    <citation type="submission" date="2008-01" db="EMBL/GenBank/DDBJ databases">
        <title>NISC comparative sequencing initiative.</title>
        <authorList>
            <person name="Antonellis A."/>
            <person name="Ayele K."/>
            <person name="Benjamin B."/>
            <person name="Blakesley R.W."/>
            <person name="Boakye A."/>
            <person name="Bouffard G.G."/>
            <person name="Brinkley C."/>
            <person name="Brooks S."/>
            <person name="Chu G."/>
            <person name="Coleman H."/>
            <person name="Engle J."/>
            <person name="Gestole M."/>
            <person name="Greene A."/>
            <person name="Guan X."/>
            <person name="Gupta J."/>
            <person name="Haghighi P."/>
            <person name="Han J."/>
            <person name="Hansen N."/>
            <person name="Ho S.-L."/>
            <person name="Hu P."/>
            <person name="Hunter G."/>
            <person name="Hurle B."/>
            <person name="Idol J.R."/>
            <person name="Kwong P."/>
            <person name="Laric P."/>
            <person name="Larson S."/>
            <person name="Lee-Lin S.-Q."/>
            <person name="Legaspi R."/>
            <person name="Madden M."/>
            <person name="Maduro Q.L."/>
            <person name="Maduro V.B."/>
            <person name="Margulies E.H."/>
            <person name="Masiello C."/>
            <person name="Maskeri B."/>
            <person name="McDowell J."/>
            <person name="Mojidi H.A."/>
            <person name="Mullikin J.C."/>
            <person name="Oestreicher J.S."/>
            <person name="Park M."/>
            <person name="Portnoy M.E."/>
            <person name="Prasad A."/>
            <person name="Puri O."/>
            <person name="Reddix-Dugue N."/>
            <person name="Schandler K."/>
            <person name="Schueler M.G."/>
            <person name="Sison C."/>
            <person name="Stantripop S."/>
            <person name="Stephen E."/>
            <person name="Taye A."/>
            <person name="Thomas J.W."/>
            <person name="Thomas P.J."/>
            <person name="Tsipouri V."/>
            <person name="Ung L."/>
            <person name="Vogt J.L."/>
            <person name="Wetherby K.D."/>
            <person name="Young A."/>
            <person name="Green E.D."/>
        </authorList>
    </citation>
    <scope>NUCLEOTIDE SEQUENCE [LARGE SCALE GENOMIC DNA]</scope>
</reference>
<sequence length="184" mass="20572">MESFSSKSLALQAEKKLLSKMAGRSVAHLFIDETSSEVLDELYRVSKEYTHSRPQAQRVIKDLIKVAVKVAVLHRNGSFGPSELALATRFRQKLRQGAMTALSFGEVDFTFEAAVLAGLLIECRDVLLELVEHHLTPKSHGRIRHVFDHFSDPGLLTALYGPDFTQHLGKICDGLRKMLDEGKL</sequence>
<evidence type="ECO:0000250" key="1"/>
<evidence type="ECO:0000250" key="2">
    <source>
        <dbReference type="UniProtKB" id="Q6P589"/>
    </source>
</evidence>
<evidence type="ECO:0000250" key="3">
    <source>
        <dbReference type="UniProtKB" id="Q9D8Y7"/>
    </source>
</evidence>
<evidence type="ECO:0000305" key="4"/>